<evidence type="ECO:0000250" key="1">
    <source>
        <dbReference type="UniProtKB" id="Q10464"/>
    </source>
</evidence>
<evidence type="ECO:0000255" key="2"/>
<evidence type="ECO:0000269" key="3">
    <source>
    </source>
</evidence>
<evidence type="ECO:0000269" key="4">
    <source>
    </source>
</evidence>
<evidence type="ECO:0000269" key="5">
    <source>
    </source>
</evidence>
<evidence type="ECO:0000269" key="6">
    <source ref="2"/>
</evidence>
<evidence type="ECO:0000305" key="7"/>
<evidence type="ECO:0000312" key="8">
    <source>
        <dbReference type="EMBL" id="ABI18812.1"/>
    </source>
</evidence>
<evidence type="ECO:0000312" key="9">
    <source>
        <dbReference type="EMBL" id="ABI18877.1"/>
    </source>
</evidence>
<evidence type="ECO:0000312" key="10">
    <source>
        <dbReference type="EMBL" id="ABI18878.1"/>
    </source>
</evidence>
<evidence type="ECO:0000312" key="11">
    <source>
        <dbReference type="EMBL" id="ABI18879.1"/>
    </source>
</evidence>
<evidence type="ECO:0000312" key="12">
    <source>
        <dbReference type="EMBL" id="ABI18880.1"/>
    </source>
</evidence>
<evidence type="ECO:0000312" key="13">
    <source>
        <dbReference type="EMBL" id="ABI18881.1"/>
    </source>
</evidence>
<evidence type="ECO:0000312" key="14">
    <source>
        <dbReference type="EMBL" id="ABI18882.1"/>
    </source>
</evidence>
<evidence type="ECO:0000312" key="15">
    <source>
        <dbReference type="EMBL" id="ABI18883.1"/>
    </source>
</evidence>
<evidence type="ECO:0000312" key="16">
    <source>
        <dbReference type="EMBL" id="ABI18884.1"/>
    </source>
</evidence>
<evidence type="ECO:0000312" key="17">
    <source>
        <dbReference type="EMBL" id="CAB90636.1"/>
    </source>
</evidence>
<evidence type="ECO:0000312" key="18">
    <source>
        <dbReference type="EMBL" id="CAB90637.1"/>
    </source>
</evidence>
<evidence type="ECO:0000312" key="19">
    <source>
        <dbReference type="EMBL" id="CAB90638.1"/>
    </source>
</evidence>
<evidence type="ECO:0000312" key="20">
    <source>
        <dbReference type="EMBL" id="CAB90639.1"/>
    </source>
</evidence>
<evidence type="ECO:0000312" key="21">
    <source>
        <dbReference type="EMBL" id="CAB90640.1"/>
    </source>
</evidence>
<evidence type="ECO:0000312" key="22">
    <source>
        <dbReference type="EMBL" id="CAB90641.1"/>
    </source>
</evidence>
<evidence type="ECO:0000312" key="23">
    <source>
        <dbReference type="EMBL" id="CAB92292.1"/>
    </source>
</evidence>
<feature type="signal peptide" evidence="2">
    <location>
        <begin position="1"/>
        <end position="19"/>
    </location>
</feature>
<feature type="propeptide" id="PRO_0000309565" evidence="1">
    <location>
        <begin position="20"/>
        <end position="28"/>
    </location>
</feature>
<feature type="chain" id="PRO_0000309566" description="Hordoindoline-B2">
    <location>
        <begin position="29"/>
        <end position="147"/>
    </location>
</feature>
<feature type="sequence variant" evidence="6">
    <original>F</original>
    <variation>L</variation>
    <location>
        <position position="5"/>
    </location>
</feature>
<feature type="sequence variant" evidence="6">
    <original>L</original>
    <variation>I</variation>
    <location>
        <position position="6"/>
    </location>
</feature>
<feature type="sequence variant" evidence="4">
    <original>S</original>
    <variation>P</variation>
    <location>
        <position position="22"/>
    </location>
</feature>
<feature type="sequence variant" evidence="6">
    <original>P</original>
    <variation>L</variation>
    <location>
        <position position="64"/>
    </location>
</feature>
<feature type="sequence variant" evidence="4">
    <original>E</original>
    <variation>K</variation>
    <location>
        <position position="82"/>
    </location>
</feature>
<feature type="sequence variant" evidence="6">
    <original>L</original>
    <variation>M</variation>
    <location>
        <position position="88"/>
    </location>
</feature>
<feature type="sequence variant" evidence="6">
    <original>H</original>
    <variation>Q</variation>
    <location>
        <position position="94"/>
    </location>
</feature>
<feature type="sequence variant" evidence="6">
    <original>A</original>
    <variation>D</variation>
    <location>
        <position position="118"/>
    </location>
</feature>
<feature type="sequence variant" evidence="4">
    <original>I</original>
    <variation>V</variation>
    <location>
        <position position="123"/>
    </location>
</feature>
<feature type="sequence variant" evidence="6">
    <original>V</original>
    <variation>A</variation>
    <location>
        <position position="137"/>
    </location>
</feature>
<feature type="sequence variant" evidence="6">
    <original>R</original>
    <variation>K</variation>
    <location>
        <position position="140"/>
    </location>
</feature>
<feature type="sequence conflict" description="In Ref. 3; AA sequence." evidence="7" ref="3">
    <original>W</original>
    <variation>M</variation>
    <location>
        <position position="72"/>
    </location>
</feature>
<organism>
    <name type="scientific">Hordeum vulgare</name>
    <name type="common">Barley</name>
    <dbReference type="NCBI Taxonomy" id="4513"/>
    <lineage>
        <taxon>Eukaryota</taxon>
        <taxon>Viridiplantae</taxon>
        <taxon>Streptophyta</taxon>
        <taxon>Embryophyta</taxon>
        <taxon>Tracheophyta</taxon>
        <taxon>Spermatophyta</taxon>
        <taxon>Magnoliopsida</taxon>
        <taxon>Liliopsida</taxon>
        <taxon>Poales</taxon>
        <taxon>Poaceae</taxon>
        <taxon>BOP clade</taxon>
        <taxon>Pooideae</taxon>
        <taxon>Triticodae</taxon>
        <taxon>Triticeae</taxon>
        <taxon>Hordeinae</taxon>
        <taxon>Hordeum</taxon>
    </lineage>
</organism>
<name>HINB2_HORVU</name>
<comment type="function">
    <text evidence="1 5">Acts as a membranotoxin, probably through its antibacterial and antifungal activities, contributing to the defense mechanism of the plant against predators. Forms monovalent cation-selective ion channels in membranes (By similarity). Contributes to grain texture and hardness.</text>
</comment>
<comment type="subcellular location">
    <subcellularLocation>
        <location evidence="1">Membrane</location>
    </subcellularLocation>
    <subcellularLocation>
        <location evidence="1">Secreted</location>
        <location evidence="1">Extracellular space</location>
    </subcellularLocation>
</comment>
<comment type="tissue specificity">
    <text evidence="4">Found in endosperm and aleurone layer of developing kernels, but not in the embryo.</text>
</comment>
<comment type="PTM">
    <text evidence="1">Five disulfide bonds are present.</text>
</comment>
<comment type="sequence caution" evidence="7">
    <conflict type="erroneous initiation">
        <sequence resource="EMBL-CDS" id="CAB90636"/>
    </conflict>
</comment>
<comment type="sequence caution" evidence="7">
    <conflict type="erroneous initiation">
        <sequence resource="EMBL-CDS" id="CAB90637"/>
    </conflict>
</comment>
<comment type="sequence caution" evidence="7">
    <conflict type="erroneous initiation">
        <sequence resource="EMBL-CDS" id="CAB90638"/>
    </conflict>
</comment>
<comment type="sequence caution" evidence="7">
    <conflict type="erroneous initiation">
        <sequence resource="EMBL-CDS" id="CAB90639"/>
    </conflict>
</comment>
<comment type="sequence caution" evidence="7">
    <conflict type="erroneous initiation">
        <sequence resource="EMBL-CDS" id="CAB90640"/>
    </conflict>
</comment>
<comment type="sequence caution" evidence="7">
    <conflict type="erroneous initiation">
        <sequence resource="EMBL-CDS" id="CAB90641"/>
    </conflict>
</comment>
<accession>Q9LEH8</accession>
<accession>P82940</accession>
<accession>Q0GIU5</accession>
<accession>Q0GIU7</accession>
<accession>Q0GIU9</accession>
<accession>Q0GIV7</accession>
<accession>Q0GIW8</accession>
<accession>Q0GIX2</accession>
<accession>Q0GIY1</accession>
<accession>Q0GJ02</accession>
<accession>Q0GJ16</accession>
<accession>Q9LE34</accession>
<accession>Q9M3V3</accession>
<accession>Q9M3V4</accession>
<accession>Q9M3V5</accession>
<accession>Q9M3V6</accession>
<reference evidence="7 23" key="1">
    <citation type="journal article" date="2001" name="Plant Mol. Biol.">
        <title>Identification and molecular characterisation of hordoindolines from barley grain.</title>
        <authorList>
            <person name="Darlington H.F."/>
            <person name="Rouster J."/>
            <person name="Hoffmann L."/>
            <person name="Halford N.G."/>
            <person name="Shewry P.R."/>
            <person name="Simpson D.J."/>
        </authorList>
    </citation>
    <scope>NUCLEOTIDE SEQUENCE [GENOMIC DNA / MRNA]</scope>
    <scope>PROTEIN SEQUENCE OF 29-38</scope>
    <scope>TISSUE SPECIFICITY</scope>
    <scope>VARIANTS PRO-22; LYS-82 AND VAL-123</scope>
    <source>
        <strain evidence="17">cv. Britannia</strain>
        <strain evidence="4 18">cv. Chariot</strain>
        <strain evidence="20">cv. Derkado</strain>
        <strain evidence="21">cv. Hart</strain>
        <strain evidence="23">cv. Igri</strain>
        <strain evidence="22">cv. Sundance</strain>
        <strain evidence="19">cv. Triumph</strain>
        <tissue evidence="22">Endosperm</tissue>
        <tissue evidence="23">Leaf</tissue>
        <tissue evidence="4">Seed</tissue>
    </source>
</reference>
<reference evidence="7 8" key="2">
    <citation type="submission" date="2006-07" db="EMBL/GenBank/DDBJ databases">
        <title>The variation of hardness locus and endosperm texture in spring cultivars of barley (Hordeum vulgare L.).</title>
        <authorList>
            <person name="Turuspekov Y."/>
            <person name="Beecher B."/>
            <person name="Darlington Y.F."/>
            <person name="Bowman J."/>
            <person name="Blake T.K."/>
            <person name="Giroux M.J."/>
        </authorList>
    </citation>
    <scope>NUCLEOTIDE SEQUENCE [GENOMIC DNA]</scope>
    <scope>VARIANTS LEU-5; ILE-6; LEU-64; MET-88; GLN-94; ASP-118; ALA-137 AND LYS-140</scope>
    <source>
        <strain evidence="11">cv. Baronesse</strain>
        <strain evidence="14">cv. Chinook</strain>
        <strain evidence="12">cv. Harrington</strain>
        <strain evidence="8">cv. Landrace</strain>
        <strain evidence="13">cv. Lewis</strain>
        <strain evidence="10">cv. Medallion</strain>
        <strain evidence="16">cv. Merlin</strain>
        <strain evidence="15">cv. Morex</strain>
        <strain evidence="9">cv. Steptoe</strain>
    </source>
</reference>
<reference evidence="7" key="3">
    <citation type="journal article" date="2000" name="Electrophoresis">
        <title>Separation and characterization of basic barley seed proteins.</title>
        <authorList>
            <person name="Kristoffersen H.E."/>
            <person name="Flengsrud R."/>
        </authorList>
    </citation>
    <scope>PROTEIN SEQUENCE OF 72-82</scope>
    <source>
        <strain evidence="3">cv. Bomi</strain>
        <tissue evidence="3">Starchy endosperm</tissue>
    </source>
</reference>
<reference evidence="7" key="4">
    <citation type="journal article" date="2002" name="Genome">
        <title>Hordoindolines are associated with a major endosperm-texture QTL in barley (Hordeum vulgare).</title>
        <authorList>
            <person name="Beecher B."/>
            <person name="Bowman J."/>
            <person name="Martin J.M."/>
            <person name="Bettge A.D."/>
            <person name="Morris C.F."/>
            <person name="Blake T.K."/>
            <person name="Giroux M.J."/>
        </authorList>
    </citation>
    <scope>FUNCTION</scope>
</reference>
<protein>
    <recommendedName>
        <fullName>Hordoindoline-B2</fullName>
    </recommendedName>
    <alternativeName>
        <fullName>Puroindoline-B</fullName>
    </alternativeName>
</protein>
<dbReference type="EMBL" id="AJ276143">
    <property type="protein sequence ID" value="CAB92292.1"/>
    <property type="molecule type" value="Genomic_DNA"/>
</dbReference>
<dbReference type="EMBL" id="AJ277548">
    <property type="protein sequence ID" value="CAB90636.1"/>
    <property type="status" value="ALT_INIT"/>
    <property type="molecule type" value="mRNA"/>
</dbReference>
<dbReference type="EMBL" id="AJ277549">
    <property type="protein sequence ID" value="CAB90637.1"/>
    <property type="status" value="ALT_INIT"/>
    <property type="molecule type" value="mRNA"/>
</dbReference>
<dbReference type="EMBL" id="AJ277550">
    <property type="protein sequence ID" value="CAB90638.1"/>
    <property type="status" value="ALT_INIT"/>
    <property type="molecule type" value="mRNA"/>
</dbReference>
<dbReference type="EMBL" id="AJ277551">
    <property type="protein sequence ID" value="CAB90639.1"/>
    <property type="status" value="ALT_INIT"/>
    <property type="molecule type" value="mRNA"/>
</dbReference>
<dbReference type="EMBL" id="AJ277552">
    <property type="protein sequence ID" value="CAB90640.1"/>
    <property type="status" value="ALT_INIT"/>
    <property type="molecule type" value="mRNA"/>
</dbReference>
<dbReference type="EMBL" id="AJ277553">
    <property type="protein sequence ID" value="CAB90641.1"/>
    <property type="status" value="ALT_INIT"/>
    <property type="molecule type" value="mRNA"/>
</dbReference>
<dbReference type="EMBL" id="DQ862295">
    <property type="protein sequence ID" value="ABI18804.1"/>
    <property type="molecule type" value="Genomic_DNA"/>
</dbReference>
<dbReference type="EMBL" id="DQ862296">
    <property type="protein sequence ID" value="ABI18805.1"/>
    <property type="molecule type" value="Genomic_DNA"/>
</dbReference>
<dbReference type="EMBL" id="DQ862297">
    <property type="protein sequence ID" value="ABI18806.1"/>
    <property type="molecule type" value="Genomic_DNA"/>
</dbReference>
<dbReference type="EMBL" id="DQ862298">
    <property type="protein sequence ID" value="ABI18807.1"/>
    <property type="molecule type" value="Genomic_DNA"/>
</dbReference>
<dbReference type="EMBL" id="DQ862299">
    <property type="protein sequence ID" value="ABI18808.1"/>
    <property type="molecule type" value="Genomic_DNA"/>
</dbReference>
<dbReference type="EMBL" id="DQ862300">
    <property type="protein sequence ID" value="ABI18809.1"/>
    <property type="molecule type" value="Genomic_DNA"/>
</dbReference>
<dbReference type="EMBL" id="DQ862301">
    <property type="protein sequence ID" value="ABI18810.1"/>
    <property type="molecule type" value="Genomic_DNA"/>
</dbReference>
<dbReference type="EMBL" id="DQ862302">
    <property type="protein sequence ID" value="ABI18811.1"/>
    <property type="molecule type" value="Genomic_DNA"/>
</dbReference>
<dbReference type="EMBL" id="DQ862303">
    <property type="protein sequence ID" value="ABI18812.1"/>
    <property type="molecule type" value="Genomic_DNA"/>
</dbReference>
<dbReference type="EMBL" id="DQ862304">
    <property type="protein sequence ID" value="ABI18813.1"/>
    <property type="molecule type" value="Genomic_DNA"/>
</dbReference>
<dbReference type="EMBL" id="DQ862305">
    <property type="protein sequence ID" value="ABI18814.1"/>
    <property type="molecule type" value="Genomic_DNA"/>
</dbReference>
<dbReference type="EMBL" id="DQ862306">
    <property type="protein sequence ID" value="ABI18815.1"/>
    <property type="molecule type" value="Genomic_DNA"/>
</dbReference>
<dbReference type="EMBL" id="DQ862307">
    <property type="protein sequence ID" value="ABI18816.1"/>
    <property type="molecule type" value="Genomic_DNA"/>
</dbReference>
<dbReference type="EMBL" id="DQ862308">
    <property type="protein sequence ID" value="ABI18817.1"/>
    <property type="molecule type" value="Genomic_DNA"/>
</dbReference>
<dbReference type="EMBL" id="DQ862309">
    <property type="protein sequence ID" value="ABI18818.1"/>
    <property type="molecule type" value="Genomic_DNA"/>
</dbReference>
<dbReference type="EMBL" id="DQ862310">
    <property type="protein sequence ID" value="ABI18819.1"/>
    <property type="molecule type" value="Genomic_DNA"/>
</dbReference>
<dbReference type="EMBL" id="DQ862311">
    <property type="protein sequence ID" value="ABI18820.1"/>
    <property type="molecule type" value="Genomic_DNA"/>
</dbReference>
<dbReference type="EMBL" id="DQ862312">
    <property type="protein sequence ID" value="ABI18821.1"/>
    <property type="molecule type" value="Genomic_DNA"/>
</dbReference>
<dbReference type="EMBL" id="DQ862313">
    <property type="protein sequence ID" value="ABI18822.1"/>
    <property type="molecule type" value="Genomic_DNA"/>
</dbReference>
<dbReference type="EMBL" id="DQ862314">
    <property type="protein sequence ID" value="ABI18823.1"/>
    <property type="molecule type" value="Genomic_DNA"/>
</dbReference>
<dbReference type="EMBL" id="DQ862315">
    <property type="protein sequence ID" value="ABI18824.1"/>
    <property type="molecule type" value="Genomic_DNA"/>
</dbReference>
<dbReference type="EMBL" id="DQ862316">
    <property type="protein sequence ID" value="ABI18825.1"/>
    <property type="molecule type" value="Genomic_DNA"/>
</dbReference>
<dbReference type="EMBL" id="DQ862317">
    <property type="protein sequence ID" value="ABI18826.1"/>
    <property type="molecule type" value="Genomic_DNA"/>
</dbReference>
<dbReference type="EMBL" id="DQ862318">
    <property type="protein sequence ID" value="ABI18827.1"/>
    <property type="molecule type" value="Genomic_DNA"/>
</dbReference>
<dbReference type="EMBL" id="DQ862319">
    <property type="protein sequence ID" value="ABI18828.1"/>
    <property type="molecule type" value="Genomic_DNA"/>
</dbReference>
<dbReference type="EMBL" id="DQ862320">
    <property type="protein sequence ID" value="ABI18829.1"/>
    <property type="molecule type" value="Genomic_DNA"/>
</dbReference>
<dbReference type="EMBL" id="DQ862321">
    <property type="protein sequence ID" value="ABI18830.1"/>
    <property type="molecule type" value="Genomic_DNA"/>
</dbReference>
<dbReference type="EMBL" id="DQ862322">
    <property type="protein sequence ID" value="ABI18831.1"/>
    <property type="molecule type" value="Genomic_DNA"/>
</dbReference>
<dbReference type="EMBL" id="DQ862323">
    <property type="protein sequence ID" value="ABI18832.1"/>
    <property type="molecule type" value="Genomic_DNA"/>
</dbReference>
<dbReference type="EMBL" id="DQ862324">
    <property type="protein sequence ID" value="ABI18833.1"/>
    <property type="molecule type" value="Genomic_DNA"/>
</dbReference>
<dbReference type="EMBL" id="DQ862325">
    <property type="protein sequence ID" value="ABI18834.1"/>
    <property type="molecule type" value="Genomic_DNA"/>
</dbReference>
<dbReference type="EMBL" id="DQ862326">
    <property type="protein sequence ID" value="ABI18835.1"/>
    <property type="molecule type" value="Genomic_DNA"/>
</dbReference>
<dbReference type="EMBL" id="DQ862327">
    <property type="protein sequence ID" value="ABI18836.1"/>
    <property type="molecule type" value="Genomic_DNA"/>
</dbReference>
<dbReference type="EMBL" id="DQ862328">
    <property type="protein sequence ID" value="ABI18837.1"/>
    <property type="molecule type" value="Genomic_DNA"/>
</dbReference>
<dbReference type="EMBL" id="DQ862329">
    <property type="protein sequence ID" value="ABI18838.1"/>
    <property type="molecule type" value="Genomic_DNA"/>
</dbReference>
<dbReference type="EMBL" id="DQ862330">
    <property type="protein sequence ID" value="ABI18839.1"/>
    <property type="molecule type" value="Genomic_DNA"/>
</dbReference>
<dbReference type="EMBL" id="DQ862331">
    <property type="protein sequence ID" value="ABI18840.1"/>
    <property type="molecule type" value="Genomic_DNA"/>
</dbReference>
<dbReference type="EMBL" id="DQ862332">
    <property type="protein sequence ID" value="ABI18841.1"/>
    <property type="molecule type" value="Genomic_DNA"/>
</dbReference>
<dbReference type="EMBL" id="DQ862333">
    <property type="protein sequence ID" value="ABI18842.1"/>
    <property type="molecule type" value="Genomic_DNA"/>
</dbReference>
<dbReference type="EMBL" id="DQ862334">
    <property type="protein sequence ID" value="ABI18843.1"/>
    <property type="molecule type" value="Genomic_DNA"/>
</dbReference>
<dbReference type="EMBL" id="DQ862335">
    <property type="protein sequence ID" value="ABI18844.1"/>
    <property type="molecule type" value="Genomic_DNA"/>
</dbReference>
<dbReference type="EMBL" id="DQ862336">
    <property type="protein sequence ID" value="ABI18845.1"/>
    <property type="molecule type" value="Genomic_DNA"/>
</dbReference>
<dbReference type="EMBL" id="DQ862337">
    <property type="protein sequence ID" value="ABI18846.1"/>
    <property type="molecule type" value="Genomic_DNA"/>
</dbReference>
<dbReference type="EMBL" id="DQ862338">
    <property type="protein sequence ID" value="ABI18847.1"/>
    <property type="molecule type" value="Genomic_DNA"/>
</dbReference>
<dbReference type="EMBL" id="DQ862339">
    <property type="protein sequence ID" value="ABI18848.1"/>
    <property type="molecule type" value="Genomic_DNA"/>
</dbReference>
<dbReference type="EMBL" id="DQ862340">
    <property type="protein sequence ID" value="ABI18849.1"/>
    <property type="molecule type" value="Genomic_DNA"/>
</dbReference>
<dbReference type="EMBL" id="DQ862341">
    <property type="protein sequence ID" value="ABI18850.1"/>
    <property type="molecule type" value="Genomic_DNA"/>
</dbReference>
<dbReference type="EMBL" id="DQ862342">
    <property type="protein sequence ID" value="ABI18851.1"/>
    <property type="molecule type" value="Genomic_DNA"/>
</dbReference>
<dbReference type="EMBL" id="DQ862343">
    <property type="protein sequence ID" value="ABI18852.1"/>
    <property type="molecule type" value="Genomic_DNA"/>
</dbReference>
<dbReference type="EMBL" id="DQ862344">
    <property type="protein sequence ID" value="ABI18853.1"/>
    <property type="molecule type" value="Genomic_DNA"/>
</dbReference>
<dbReference type="EMBL" id="DQ862345">
    <property type="protein sequence ID" value="ABI18854.1"/>
    <property type="molecule type" value="Genomic_DNA"/>
</dbReference>
<dbReference type="EMBL" id="DQ862346">
    <property type="protein sequence ID" value="ABI18855.1"/>
    <property type="molecule type" value="Genomic_DNA"/>
</dbReference>
<dbReference type="EMBL" id="DQ862347">
    <property type="protein sequence ID" value="ABI18856.1"/>
    <property type="molecule type" value="Genomic_DNA"/>
</dbReference>
<dbReference type="EMBL" id="DQ862348">
    <property type="protein sequence ID" value="ABI18857.1"/>
    <property type="molecule type" value="Genomic_DNA"/>
</dbReference>
<dbReference type="EMBL" id="DQ862349">
    <property type="protein sequence ID" value="ABI18858.1"/>
    <property type="molecule type" value="Genomic_DNA"/>
</dbReference>
<dbReference type="EMBL" id="DQ862350">
    <property type="protein sequence ID" value="ABI18859.1"/>
    <property type="molecule type" value="Genomic_DNA"/>
</dbReference>
<dbReference type="EMBL" id="DQ862351">
    <property type="protein sequence ID" value="ABI18860.1"/>
    <property type="molecule type" value="Genomic_DNA"/>
</dbReference>
<dbReference type="EMBL" id="DQ862352">
    <property type="protein sequence ID" value="ABI18861.1"/>
    <property type="molecule type" value="Genomic_DNA"/>
</dbReference>
<dbReference type="EMBL" id="DQ862353">
    <property type="protein sequence ID" value="ABI18862.1"/>
    <property type="molecule type" value="Genomic_DNA"/>
</dbReference>
<dbReference type="EMBL" id="DQ862354">
    <property type="protein sequence ID" value="ABI18863.1"/>
    <property type="molecule type" value="Genomic_DNA"/>
</dbReference>
<dbReference type="EMBL" id="DQ862355">
    <property type="protein sequence ID" value="ABI18864.1"/>
    <property type="molecule type" value="Genomic_DNA"/>
</dbReference>
<dbReference type="EMBL" id="DQ862356">
    <property type="protein sequence ID" value="ABI18865.1"/>
    <property type="molecule type" value="Genomic_DNA"/>
</dbReference>
<dbReference type="EMBL" id="DQ862357">
    <property type="protein sequence ID" value="ABI18866.1"/>
    <property type="molecule type" value="Genomic_DNA"/>
</dbReference>
<dbReference type="EMBL" id="DQ862358">
    <property type="protein sequence ID" value="ABI18867.1"/>
    <property type="molecule type" value="Genomic_DNA"/>
</dbReference>
<dbReference type="EMBL" id="DQ862359">
    <property type="protein sequence ID" value="ABI18868.1"/>
    <property type="molecule type" value="Genomic_DNA"/>
</dbReference>
<dbReference type="EMBL" id="DQ862360">
    <property type="protein sequence ID" value="ABI18869.1"/>
    <property type="molecule type" value="Genomic_DNA"/>
</dbReference>
<dbReference type="EMBL" id="DQ862361">
    <property type="protein sequence ID" value="ABI18870.1"/>
    <property type="molecule type" value="Genomic_DNA"/>
</dbReference>
<dbReference type="EMBL" id="DQ862362">
    <property type="protein sequence ID" value="ABI18871.1"/>
    <property type="molecule type" value="Genomic_DNA"/>
</dbReference>
<dbReference type="EMBL" id="DQ862363">
    <property type="protein sequence ID" value="ABI18872.1"/>
    <property type="molecule type" value="Genomic_DNA"/>
</dbReference>
<dbReference type="EMBL" id="DQ862364">
    <property type="protein sequence ID" value="ABI18873.1"/>
    <property type="molecule type" value="Genomic_DNA"/>
</dbReference>
<dbReference type="EMBL" id="DQ862365">
    <property type="protein sequence ID" value="ABI18874.1"/>
    <property type="molecule type" value="Genomic_DNA"/>
</dbReference>
<dbReference type="EMBL" id="DQ862366">
    <property type="protein sequence ID" value="ABI18875.1"/>
    <property type="molecule type" value="Genomic_DNA"/>
</dbReference>
<dbReference type="EMBL" id="DQ862367">
    <property type="protein sequence ID" value="ABI18876.1"/>
    <property type="molecule type" value="Genomic_DNA"/>
</dbReference>
<dbReference type="EMBL" id="DQ862368">
    <property type="protein sequence ID" value="ABI18877.1"/>
    <property type="molecule type" value="Genomic_DNA"/>
</dbReference>
<dbReference type="EMBL" id="DQ862369">
    <property type="protein sequence ID" value="ABI18878.1"/>
    <property type="molecule type" value="Genomic_DNA"/>
</dbReference>
<dbReference type="EMBL" id="DQ862370">
    <property type="protein sequence ID" value="ABI18879.1"/>
    <property type="molecule type" value="Genomic_DNA"/>
</dbReference>
<dbReference type="EMBL" id="DQ862371">
    <property type="protein sequence ID" value="ABI18880.1"/>
    <property type="molecule type" value="Genomic_DNA"/>
</dbReference>
<dbReference type="EMBL" id="DQ862372">
    <property type="protein sequence ID" value="ABI18881.1"/>
    <property type="molecule type" value="Genomic_DNA"/>
</dbReference>
<dbReference type="EMBL" id="DQ862373">
    <property type="protein sequence ID" value="ABI18882.1"/>
    <property type="molecule type" value="Genomic_DNA"/>
</dbReference>
<dbReference type="EMBL" id="DQ862374">
    <property type="protein sequence ID" value="ABI18883.1"/>
    <property type="molecule type" value="Genomic_DNA"/>
</dbReference>
<dbReference type="EMBL" id="DQ862375">
    <property type="protein sequence ID" value="ABI18884.1"/>
    <property type="molecule type" value="Genomic_DNA"/>
</dbReference>
<dbReference type="SMR" id="Q9LEH8"/>
<dbReference type="GO" id="GO:0005576">
    <property type="term" value="C:extracellular region"/>
    <property type="evidence" value="ECO:0007669"/>
    <property type="project" value="UniProtKB-SubCell"/>
</dbReference>
<dbReference type="GO" id="GO:0016020">
    <property type="term" value="C:membrane"/>
    <property type="evidence" value="ECO:0007669"/>
    <property type="project" value="UniProtKB-SubCell"/>
</dbReference>
<dbReference type="GO" id="GO:0045735">
    <property type="term" value="F:nutrient reservoir activity"/>
    <property type="evidence" value="ECO:0007669"/>
    <property type="project" value="InterPro"/>
</dbReference>
<dbReference type="GO" id="GO:0004867">
    <property type="term" value="F:serine-type endopeptidase inhibitor activity"/>
    <property type="evidence" value="ECO:0007669"/>
    <property type="project" value="InterPro"/>
</dbReference>
<dbReference type="GO" id="GO:0090729">
    <property type="term" value="F:toxin activity"/>
    <property type="evidence" value="ECO:0007669"/>
    <property type="project" value="UniProtKB-KW"/>
</dbReference>
<dbReference type="GO" id="GO:0042742">
    <property type="term" value="P:defense response to bacterium"/>
    <property type="evidence" value="ECO:0007669"/>
    <property type="project" value="UniProtKB-KW"/>
</dbReference>
<dbReference type="CDD" id="cd00261">
    <property type="entry name" value="AAI_SS"/>
    <property type="match status" value="1"/>
</dbReference>
<dbReference type="Gene3D" id="1.10.110.10">
    <property type="entry name" value="Plant lipid-transfer and hydrophobic proteins"/>
    <property type="match status" value="1"/>
</dbReference>
<dbReference type="InterPro" id="IPR006106">
    <property type="entry name" value="Allergen/soft/tryp_amyl_inhib"/>
</dbReference>
<dbReference type="InterPro" id="IPR036312">
    <property type="entry name" value="Bifun_inhib/LTP/seed_sf"/>
</dbReference>
<dbReference type="InterPro" id="IPR016140">
    <property type="entry name" value="Bifunc_inhib/LTP/seed_store"/>
</dbReference>
<dbReference type="InterPro" id="IPR001954">
    <property type="entry name" value="Glia_glutenin"/>
</dbReference>
<dbReference type="PANTHER" id="PTHR33454">
    <property type="entry name" value="PROLAMIN PPROL 14P"/>
    <property type="match status" value="1"/>
</dbReference>
<dbReference type="PANTHER" id="PTHR33454:SF10">
    <property type="entry name" value="PUROINDOLINE-B"/>
    <property type="match status" value="1"/>
</dbReference>
<dbReference type="Pfam" id="PF00234">
    <property type="entry name" value="Tryp_alpha_amyl"/>
    <property type="match status" value="1"/>
</dbReference>
<dbReference type="PRINTS" id="PR00808">
    <property type="entry name" value="AMLASEINHBTR"/>
</dbReference>
<dbReference type="SMART" id="SM00499">
    <property type="entry name" value="AAI"/>
    <property type="match status" value="1"/>
</dbReference>
<dbReference type="SUPFAM" id="SSF47699">
    <property type="entry name" value="Bifunctional inhibitor/lipid-transfer protein/seed storage 2S albumin"/>
    <property type="match status" value="1"/>
</dbReference>
<gene>
    <name type="primary">HINB-2</name>
    <name type="synonym">HOI-B2</name>
</gene>
<proteinExistence type="evidence at protein level"/>
<keyword id="KW-0044">Antibiotic</keyword>
<keyword id="KW-0929">Antimicrobial</keyword>
<keyword id="KW-0903">Direct protein sequencing</keyword>
<keyword id="KW-1015">Disulfide bond</keyword>
<keyword id="KW-0472">Membrane</keyword>
<keyword id="KW-0611">Plant defense</keyword>
<keyword id="KW-0964">Secreted</keyword>
<keyword id="KW-0732">Signal</keyword>
<keyword id="KW-0800">Toxin</keyword>
<sequence>MKTLFLLALLALVASTTSAQYSVGGGYNDVGGGGGSQQCPQERPNLGSCKDYVMERCFTMKDFPVTWPTKWWKGGCEHEVREKCCQQLSQIAPHCRCDAIRGVIQGKLGGIFGIGGGAVFKQIQRAQILPSKCNMGVDCRFPSGYYW</sequence>